<reference key="1">
    <citation type="journal article" date="2001" name="EMBO J.">
        <title>CENP-H, a constitutive centromere component, is required for centromere targeting of CENP-C in vertebrate cells.</title>
        <authorList>
            <person name="Fukagawa T."/>
            <person name="Mikami Y."/>
            <person name="Nishihashi A."/>
            <person name="Regnier V."/>
            <person name="Haraguchi T."/>
            <person name="Hiraoka Y."/>
            <person name="Sugata N."/>
            <person name="Todokoro K."/>
            <person name="Brown W."/>
            <person name="Ikemura T."/>
        </authorList>
    </citation>
    <scope>NUCLEOTIDE SEQUENCE [MRNA]</scope>
    <scope>FUNCTION</scope>
    <scope>SUBCELLULAR LOCATION</scope>
</reference>
<reference key="2">
    <citation type="journal article" date="2005" name="Mol. Cell. Biol.">
        <title>The functional region of CENP-H interacts with the Nuf2 complex that localizes to centromere during mitosis.</title>
        <authorList>
            <person name="Mikami Y."/>
            <person name="Hori T."/>
            <person name="Kimura H."/>
            <person name="Fukagawa T."/>
        </authorList>
    </citation>
    <scope>INTERACTION WITH NDC80</scope>
</reference>
<reference key="3">
    <citation type="journal article" date="2006" name="Nat. Cell Biol.">
        <title>The CENP-H-I complex is required for the efficient incorporation of newly synthesized CENP-A into centromeres.</title>
        <authorList>
            <person name="Okada M."/>
            <person name="Cheeseman I.M."/>
            <person name="Hori T."/>
            <person name="Okawa K."/>
            <person name="McLeod I.X."/>
            <person name="Yates J.R. III"/>
            <person name="Desai A."/>
            <person name="Fukagawa T."/>
        </authorList>
    </citation>
    <scope>IDENTIFICATION BY MASS SPECTROMETRY</scope>
    <scope>IDENTIFICATION IN A COMPLEX WITH CENPI; CENPK; CENPL; CENPM; CENPO AND CENPP</scope>
</reference>
<feature type="chain" id="PRO_0000249480" description="Centromere protein H">
    <location>
        <begin position="1"/>
        <end position="235"/>
    </location>
</feature>
<feature type="region of interest" description="Disordered" evidence="2">
    <location>
        <begin position="1"/>
        <end position="23"/>
    </location>
</feature>
<feature type="coiled-coil region" evidence="1">
    <location>
        <begin position="125"/>
        <end position="145"/>
    </location>
</feature>
<organism>
    <name type="scientific">Gallus gallus</name>
    <name type="common">Chicken</name>
    <dbReference type="NCBI Taxonomy" id="9031"/>
    <lineage>
        <taxon>Eukaryota</taxon>
        <taxon>Metazoa</taxon>
        <taxon>Chordata</taxon>
        <taxon>Craniata</taxon>
        <taxon>Vertebrata</taxon>
        <taxon>Euteleostomi</taxon>
        <taxon>Archelosauria</taxon>
        <taxon>Archosauria</taxon>
        <taxon>Dinosauria</taxon>
        <taxon>Saurischia</taxon>
        <taxon>Theropoda</taxon>
        <taxon>Coelurosauria</taxon>
        <taxon>Aves</taxon>
        <taxon>Neognathae</taxon>
        <taxon>Galloanserae</taxon>
        <taxon>Galliformes</taxon>
        <taxon>Phasianidae</taxon>
        <taxon>Phasianinae</taxon>
        <taxon>Gallus</taxon>
    </lineage>
</organism>
<evidence type="ECO:0000255" key="1"/>
<evidence type="ECO:0000256" key="2">
    <source>
        <dbReference type="SAM" id="MobiDB-lite"/>
    </source>
</evidence>
<evidence type="ECO:0000269" key="3">
    <source>
    </source>
</evidence>
<evidence type="ECO:0000269" key="4">
    <source>
    </source>
</evidence>
<evidence type="ECO:0000269" key="5">
    <source>
    </source>
</evidence>
<keyword id="KW-0137">Centromere</keyword>
<keyword id="KW-0158">Chromosome</keyword>
<keyword id="KW-0175">Coiled coil</keyword>
<keyword id="KW-0995">Kinetochore</keyword>
<keyword id="KW-0539">Nucleus</keyword>
<keyword id="KW-1185">Reference proteome</keyword>
<proteinExistence type="evidence at protein level"/>
<dbReference type="EMBL" id="AB055783">
    <property type="protein sequence ID" value="BAB63439.1"/>
    <property type="molecule type" value="mRNA"/>
</dbReference>
<dbReference type="RefSeq" id="NP_989942.1">
    <property type="nucleotide sequence ID" value="NM_204611.2"/>
</dbReference>
<dbReference type="SMR" id="Q90ZF9"/>
<dbReference type="BioGRID" id="675606">
    <property type="interactions" value="9"/>
</dbReference>
<dbReference type="FunCoup" id="Q90ZF9">
    <property type="interactions" value="301"/>
</dbReference>
<dbReference type="IntAct" id="Q90ZF9">
    <property type="interactions" value="10"/>
</dbReference>
<dbReference type="STRING" id="9031.ENSGALP00000032226"/>
<dbReference type="PaxDb" id="9031-ENSGALP00000032226"/>
<dbReference type="Ensembl" id="ENSGALT00010025866.1">
    <property type="protein sequence ID" value="ENSGALP00010014558.1"/>
    <property type="gene ID" value="ENSGALG00010010809.1"/>
</dbReference>
<dbReference type="GeneID" id="395316"/>
<dbReference type="KEGG" id="gga:395316"/>
<dbReference type="CTD" id="64946"/>
<dbReference type="VEuPathDB" id="HostDB:geneid_395316"/>
<dbReference type="eggNOG" id="ENOG502S0VG">
    <property type="taxonomic scope" value="Eukaryota"/>
</dbReference>
<dbReference type="GeneTree" id="ENSGT00390000009578"/>
<dbReference type="HOGENOM" id="CLU_097390_0_0_1"/>
<dbReference type="InParanoid" id="Q90ZF9"/>
<dbReference type="OMA" id="HRNVQYE"/>
<dbReference type="OrthoDB" id="2274804at2759"/>
<dbReference type="PhylomeDB" id="Q90ZF9"/>
<dbReference type="TreeFam" id="TF101134"/>
<dbReference type="Reactome" id="R-GGA-141444">
    <property type="pathway name" value="Amplification of signal from unattached kinetochores via a MAD2 inhibitory signal"/>
</dbReference>
<dbReference type="Reactome" id="R-GGA-2467813">
    <property type="pathway name" value="Separation of Sister Chromatids"/>
</dbReference>
<dbReference type="Reactome" id="R-GGA-2500257">
    <property type="pathway name" value="Resolution of Sister Chromatid Cohesion"/>
</dbReference>
<dbReference type="Reactome" id="R-GGA-5663220">
    <property type="pathway name" value="RHO GTPases Activate Formins"/>
</dbReference>
<dbReference type="Reactome" id="R-GGA-606279">
    <property type="pathway name" value="Deposition of new CENPA-containing nucleosomes at the centromere"/>
</dbReference>
<dbReference type="Reactome" id="R-GGA-9648025">
    <property type="pathway name" value="EML4 and NUDC in mitotic spindle formation"/>
</dbReference>
<dbReference type="PRO" id="PR:Q90ZF9"/>
<dbReference type="Proteomes" id="UP000000539">
    <property type="component" value="Chromosome Z"/>
</dbReference>
<dbReference type="Bgee" id="ENSGALG00000014788">
    <property type="expression patterns" value="Expressed in spermatid and 12 other cell types or tissues"/>
</dbReference>
<dbReference type="GO" id="GO:0000939">
    <property type="term" value="C:inner kinetochore"/>
    <property type="evidence" value="ECO:0007669"/>
    <property type="project" value="Ensembl"/>
</dbReference>
<dbReference type="GO" id="GO:0000776">
    <property type="term" value="C:kinetochore"/>
    <property type="evidence" value="ECO:0000318"/>
    <property type="project" value="GO_Central"/>
</dbReference>
<dbReference type="GO" id="GO:0005730">
    <property type="term" value="C:nucleolus"/>
    <property type="evidence" value="ECO:0007669"/>
    <property type="project" value="Ensembl"/>
</dbReference>
<dbReference type="GO" id="GO:0005654">
    <property type="term" value="C:nucleoplasm"/>
    <property type="evidence" value="ECO:0007669"/>
    <property type="project" value="Ensembl"/>
</dbReference>
<dbReference type="GO" id="GO:0005634">
    <property type="term" value="C:nucleus"/>
    <property type="evidence" value="ECO:0000318"/>
    <property type="project" value="GO_Central"/>
</dbReference>
<dbReference type="GO" id="GO:0043515">
    <property type="term" value="F:kinetochore binding"/>
    <property type="evidence" value="ECO:0000318"/>
    <property type="project" value="GO_Central"/>
</dbReference>
<dbReference type="GO" id="GO:0007059">
    <property type="term" value="P:chromosome segregation"/>
    <property type="evidence" value="ECO:0000318"/>
    <property type="project" value="GO_Central"/>
</dbReference>
<dbReference type="GO" id="GO:0051382">
    <property type="term" value="P:kinetochore assembly"/>
    <property type="evidence" value="ECO:0007669"/>
    <property type="project" value="InterPro"/>
</dbReference>
<dbReference type="GO" id="GO:0007052">
    <property type="term" value="P:mitotic spindle organization"/>
    <property type="evidence" value="ECO:0000318"/>
    <property type="project" value="GO_Central"/>
</dbReference>
<dbReference type="InterPro" id="IPR040034">
    <property type="entry name" value="CENP-H"/>
</dbReference>
<dbReference type="InterPro" id="IPR008426">
    <property type="entry name" value="CENP-H_C"/>
</dbReference>
<dbReference type="PANTHER" id="PTHR48122">
    <property type="entry name" value="CENTROMERE PROTEIN H"/>
    <property type="match status" value="1"/>
</dbReference>
<dbReference type="PANTHER" id="PTHR48122:SF1">
    <property type="entry name" value="CENTROMERE PROTEIN H"/>
    <property type="match status" value="1"/>
</dbReference>
<dbReference type="Pfam" id="PF05837">
    <property type="entry name" value="CENP-H"/>
    <property type="match status" value="1"/>
</dbReference>
<protein>
    <recommendedName>
        <fullName>Centromere protein H</fullName>
        <shortName>CENP-H</shortName>
    </recommendedName>
</protein>
<comment type="function">
    <text evidence="3">Component of the CENPA-HI complex, a centromeric complex involved in assembly of kinetochore proteins, mitotic progression and chromosome segregation. Required for the localization of CENPC but not CENPA to the centromere. It however may be involved in incorporation of newly synthesized CENPA into centromeres via its interaction with the CENPA-NAC complex.</text>
</comment>
<comment type="subunit">
    <text evidence="4 5">Component of the CENPA-HI complex, at least composed of CENPH, CENPI, CENPK, CENPL, CENPM, CENPO and CENPP. Interacts with NDC80.</text>
</comment>
<comment type="interaction">
    <interactant intactId="EBI-1003677">
        <id>Q90ZF9</id>
    </interactant>
    <interactant intactId="EBI-1003779">
        <id>Q76I89</id>
        <label>NDC80</label>
    </interactant>
    <organismsDiffer>false</organismsDiffer>
    <experiments>5</experiments>
</comment>
<comment type="subcellular location">
    <subcellularLocation>
        <location evidence="3">Nucleus</location>
    </subcellularLocation>
    <subcellularLocation>
        <location evidence="3">Chromosome</location>
        <location evidence="3">Centromere</location>
        <location evidence="3">Kinetochore</location>
    </subcellularLocation>
    <text>Associates with active centromere-kinetochore complexes throughout the cell cycle.</text>
</comment>
<comment type="similarity">
    <text evidence="1">Belongs to the CENP-H/MCM16 family.</text>
</comment>
<sequence>MAGRLSESVGSGPGAEAETAADPDAKRDVLEHLCARTHLKQLVMEFDTACPPDEGCNSGAEVNFIESAKETLEEVGKVKSAFESKALVIKRIQLMDALRKRVKENDGCARLIVETMRDIIKLNWEIIQAHQQARVIRENLNDIRRKRYFLKQAEGEKALRIFTTVRKKKEVVRMKIAEKLKFIHRNVQYERKVTTLVQNILQNIIVGCQINWAKDPSLRAIILQLEKDISIQNLL</sequence>
<accession>Q90ZF9</accession>
<name>CENPH_CHICK</name>
<gene>
    <name type="primary">CENPH</name>
</gene>